<accession>Q2RRL3</accession>
<keyword id="KW-0963">Cytoplasm</keyword>
<keyword id="KW-1185">Reference proteome</keyword>
<keyword id="KW-0704">Schiff base</keyword>
<keyword id="KW-0784">Thiamine biosynthesis</keyword>
<keyword id="KW-0808">Transferase</keyword>
<feature type="chain" id="PRO_0000236362" description="Thiazole synthase">
    <location>
        <begin position="1"/>
        <end position="289"/>
    </location>
</feature>
<feature type="active site" description="Schiff-base intermediate with DXP" evidence="1">
    <location>
        <position position="132"/>
    </location>
</feature>
<feature type="binding site" evidence="1">
    <location>
        <position position="193"/>
    </location>
    <ligand>
        <name>1-deoxy-D-xylulose 5-phosphate</name>
        <dbReference type="ChEBI" id="CHEBI:57792"/>
    </ligand>
</feature>
<feature type="binding site" evidence="1">
    <location>
        <begin position="219"/>
        <end position="220"/>
    </location>
    <ligand>
        <name>1-deoxy-D-xylulose 5-phosphate</name>
        <dbReference type="ChEBI" id="CHEBI:57792"/>
    </ligand>
</feature>
<feature type="binding site" evidence="1">
    <location>
        <begin position="241"/>
        <end position="242"/>
    </location>
    <ligand>
        <name>1-deoxy-D-xylulose 5-phosphate</name>
        <dbReference type="ChEBI" id="CHEBI:57792"/>
    </ligand>
</feature>
<dbReference type="EC" id="2.8.1.10" evidence="1"/>
<dbReference type="EMBL" id="CP000230">
    <property type="protein sequence ID" value="ABC23232.1"/>
    <property type="status" value="ALT_INIT"/>
    <property type="molecule type" value="Genomic_DNA"/>
</dbReference>
<dbReference type="RefSeq" id="YP_427519.2">
    <property type="nucleotide sequence ID" value="NC_007643.1"/>
</dbReference>
<dbReference type="SMR" id="Q2RRL3"/>
<dbReference type="STRING" id="269796.Rru_A2432"/>
<dbReference type="EnsemblBacteria" id="ABC23232">
    <property type="protein sequence ID" value="ABC23232"/>
    <property type="gene ID" value="Rru_A2432"/>
</dbReference>
<dbReference type="KEGG" id="rru:Rru_A2432"/>
<dbReference type="PATRIC" id="fig|269796.9.peg.2535"/>
<dbReference type="eggNOG" id="COG2022">
    <property type="taxonomic scope" value="Bacteria"/>
</dbReference>
<dbReference type="HOGENOM" id="CLU_062233_1_1_5"/>
<dbReference type="PhylomeDB" id="Q2RRL3"/>
<dbReference type="UniPathway" id="UPA00060"/>
<dbReference type="Proteomes" id="UP000001929">
    <property type="component" value="Chromosome"/>
</dbReference>
<dbReference type="GO" id="GO:0005737">
    <property type="term" value="C:cytoplasm"/>
    <property type="evidence" value="ECO:0007669"/>
    <property type="project" value="UniProtKB-SubCell"/>
</dbReference>
<dbReference type="GO" id="GO:1990107">
    <property type="term" value="F:thiazole synthase activity"/>
    <property type="evidence" value="ECO:0007669"/>
    <property type="project" value="UniProtKB-EC"/>
</dbReference>
<dbReference type="GO" id="GO:0009229">
    <property type="term" value="P:thiamine diphosphate biosynthetic process"/>
    <property type="evidence" value="ECO:0007669"/>
    <property type="project" value="UniProtKB-UniRule"/>
</dbReference>
<dbReference type="CDD" id="cd04728">
    <property type="entry name" value="ThiG"/>
    <property type="match status" value="1"/>
</dbReference>
<dbReference type="Gene3D" id="3.10.20.30">
    <property type="match status" value="1"/>
</dbReference>
<dbReference type="Gene3D" id="3.20.20.70">
    <property type="entry name" value="Aldolase class I"/>
    <property type="match status" value="1"/>
</dbReference>
<dbReference type="HAMAP" id="MF_00443">
    <property type="entry name" value="ThiG"/>
    <property type="match status" value="1"/>
</dbReference>
<dbReference type="InterPro" id="IPR013785">
    <property type="entry name" value="Aldolase_TIM"/>
</dbReference>
<dbReference type="InterPro" id="IPR012675">
    <property type="entry name" value="Beta-grasp_dom_sf"/>
</dbReference>
<dbReference type="InterPro" id="IPR033983">
    <property type="entry name" value="Thiazole_synthase_ThiG"/>
</dbReference>
<dbReference type="InterPro" id="IPR008867">
    <property type="entry name" value="ThiG"/>
</dbReference>
<dbReference type="PANTHER" id="PTHR34266">
    <property type="entry name" value="THIAZOLE SYNTHASE"/>
    <property type="match status" value="1"/>
</dbReference>
<dbReference type="PANTHER" id="PTHR34266:SF2">
    <property type="entry name" value="THIAZOLE SYNTHASE"/>
    <property type="match status" value="1"/>
</dbReference>
<dbReference type="Pfam" id="PF05690">
    <property type="entry name" value="ThiG"/>
    <property type="match status" value="1"/>
</dbReference>
<dbReference type="SUPFAM" id="SSF110399">
    <property type="entry name" value="ThiG-like"/>
    <property type="match status" value="1"/>
</dbReference>
<organism>
    <name type="scientific">Rhodospirillum rubrum (strain ATCC 11170 / ATH 1.1.1 / DSM 467 / LMG 4362 / NCIMB 8255 / S1)</name>
    <dbReference type="NCBI Taxonomy" id="269796"/>
    <lineage>
        <taxon>Bacteria</taxon>
        <taxon>Pseudomonadati</taxon>
        <taxon>Pseudomonadota</taxon>
        <taxon>Alphaproteobacteria</taxon>
        <taxon>Rhodospirillales</taxon>
        <taxon>Rhodospirillaceae</taxon>
        <taxon>Rhodospirillum</taxon>
    </lineage>
</organism>
<gene>
    <name evidence="1" type="primary">thiG</name>
    <name type="ordered locus">Rru_A2432</name>
</gene>
<evidence type="ECO:0000255" key="1">
    <source>
        <dbReference type="HAMAP-Rule" id="MF_00443"/>
    </source>
</evidence>
<evidence type="ECO:0000305" key="2"/>
<sequence length="289" mass="30952">MARTTYKETALDEGDQLEIVHFIGGGDRSDPQPADDPFTVAGRVFSSRLLVGTGKYRDFEETARAIEASGAEIVTVAVRRVNVSDPSQPMLVDYVDPAKYTYLPNTAGCFTADEAVRTLRLAREAGGWSLVKLEVLGDQRTLYPNMAETFLAAEALIRDGFEVMVYCADDPIAAKRLEDMGCVAIMPLGSLIGSGLGIINPYTIRLIKESVSVPVLVDAGVGTASDAAVAMELGCDGVLMNTAIAQAKDPVRMARAMRLAIEAGRLSYQAGRMPRKLYADPSSPLAGLI</sequence>
<protein>
    <recommendedName>
        <fullName evidence="1">Thiazole synthase</fullName>
        <ecNumber evidence="1">2.8.1.10</ecNumber>
    </recommendedName>
</protein>
<name>THIG_RHORT</name>
<reference key="1">
    <citation type="journal article" date="2011" name="Stand. Genomic Sci.">
        <title>Complete genome sequence of Rhodospirillum rubrum type strain (S1).</title>
        <authorList>
            <person name="Munk A.C."/>
            <person name="Copeland A."/>
            <person name="Lucas S."/>
            <person name="Lapidus A."/>
            <person name="Del Rio T.G."/>
            <person name="Barry K."/>
            <person name="Detter J.C."/>
            <person name="Hammon N."/>
            <person name="Israni S."/>
            <person name="Pitluck S."/>
            <person name="Brettin T."/>
            <person name="Bruce D."/>
            <person name="Han C."/>
            <person name="Tapia R."/>
            <person name="Gilna P."/>
            <person name="Schmutz J."/>
            <person name="Larimer F."/>
            <person name="Land M."/>
            <person name="Kyrpides N.C."/>
            <person name="Mavromatis K."/>
            <person name="Richardson P."/>
            <person name="Rohde M."/>
            <person name="Goeker M."/>
            <person name="Klenk H.P."/>
            <person name="Zhang Y."/>
            <person name="Roberts G.P."/>
            <person name="Reslewic S."/>
            <person name="Schwartz D.C."/>
        </authorList>
    </citation>
    <scope>NUCLEOTIDE SEQUENCE [LARGE SCALE GENOMIC DNA]</scope>
    <source>
        <strain>ATCC 11170 / ATH 1.1.1 / DSM 467 / LMG 4362 / NCIMB 8255 / S1</strain>
    </source>
</reference>
<proteinExistence type="inferred from homology"/>
<comment type="function">
    <text evidence="1">Catalyzes the rearrangement of 1-deoxy-D-xylulose 5-phosphate (DXP) to produce the thiazole phosphate moiety of thiamine. Sulfur is provided by the thiocarboxylate moiety of the carrier protein ThiS. In vitro, sulfur can be provided by H(2)S.</text>
</comment>
<comment type="catalytic activity">
    <reaction evidence="1">
        <text>[ThiS sulfur-carrier protein]-C-terminal-Gly-aminoethanethioate + 2-iminoacetate + 1-deoxy-D-xylulose 5-phosphate = [ThiS sulfur-carrier protein]-C-terminal Gly-Gly + 2-[(2R,5Z)-2-carboxy-4-methylthiazol-5(2H)-ylidene]ethyl phosphate + 2 H2O + H(+)</text>
        <dbReference type="Rhea" id="RHEA:26297"/>
        <dbReference type="Rhea" id="RHEA-COMP:12909"/>
        <dbReference type="Rhea" id="RHEA-COMP:19908"/>
        <dbReference type="ChEBI" id="CHEBI:15377"/>
        <dbReference type="ChEBI" id="CHEBI:15378"/>
        <dbReference type="ChEBI" id="CHEBI:57792"/>
        <dbReference type="ChEBI" id="CHEBI:62899"/>
        <dbReference type="ChEBI" id="CHEBI:77846"/>
        <dbReference type="ChEBI" id="CHEBI:90778"/>
        <dbReference type="ChEBI" id="CHEBI:232372"/>
        <dbReference type="EC" id="2.8.1.10"/>
    </reaction>
</comment>
<comment type="pathway">
    <text evidence="1">Cofactor biosynthesis; thiamine diphosphate biosynthesis.</text>
</comment>
<comment type="subunit">
    <text evidence="1">Homotetramer. Forms heterodimers with either ThiH or ThiS.</text>
</comment>
<comment type="subcellular location">
    <subcellularLocation>
        <location evidence="1">Cytoplasm</location>
    </subcellularLocation>
</comment>
<comment type="similarity">
    <text evidence="1">Belongs to the ThiG family.</text>
</comment>
<comment type="sequence caution" evidence="2">
    <conflict type="erroneous initiation">
        <sequence resource="EMBL-CDS" id="ABC23232"/>
    </conflict>
</comment>